<reference key="1">
    <citation type="submission" date="2008-04" db="EMBL/GenBank/DDBJ databases">
        <title>Complete sequence of chromosome of Methylobacterium populi BJ001.</title>
        <authorList>
            <consortium name="US DOE Joint Genome Institute"/>
            <person name="Copeland A."/>
            <person name="Lucas S."/>
            <person name="Lapidus A."/>
            <person name="Glavina del Rio T."/>
            <person name="Dalin E."/>
            <person name="Tice H."/>
            <person name="Bruce D."/>
            <person name="Goodwin L."/>
            <person name="Pitluck S."/>
            <person name="Chertkov O."/>
            <person name="Brettin T."/>
            <person name="Detter J.C."/>
            <person name="Han C."/>
            <person name="Kuske C.R."/>
            <person name="Schmutz J."/>
            <person name="Larimer F."/>
            <person name="Land M."/>
            <person name="Hauser L."/>
            <person name="Kyrpides N."/>
            <person name="Mikhailova N."/>
            <person name="Marx C."/>
            <person name="Richardson P."/>
        </authorList>
    </citation>
    <scope>NUCLEOTIDE SEQUENCE [LARGE SCALE GENOMIC DNA]</scope>
    <source>
        <strain>ATCC BAA-705 / NCIMB 13946 / BJ001</strain>
    </source>
</reference>
<evidence type="ECO:0000255" key="1">
    <source>
        <dbReference type="HAMAP-Rule" id="MF_00054"/>
    </source>
</evidence>
<keyword id="KW-0963">Cytoplasm</keyword>
<keyword id="KW-0251">Elongation factor</keyword>
<keyword id="KW-0342">GTP-binding</keyword>
<keyword id="KW-0547">Nucleotide-binding</keyword>
<keyword id="KW-0648">Protein biosynthesis</keyword>
<feature type="chain" id="PRO_1000091732" description="Elongation factor G">
    <location>
        <begin position="1"/>
        <end position="691"/>
    </location>
</feature>
<feature type="domain" description="tr-type G">
    <location>
        <begin position="8"/>
        <end position="283"/>
    </location>
</feature>
<feature type="binding site" evidence="1">
    <location>
        <begin position="17"/>
        <end position="24"/>
    </location>
    <ligand>
        <name>GTP</name>
        <dbReference type="ChEBI" id="CHEBI:37565"/>
    </ligand>
</feature>
<feature type="binding site" evidence="1">
    <location>
        <begin position="81"/>
        <end position="85"/>
    </location>
    <ligand>
        <name>GTP</name>
        <dbReference type="ChEBI" id="CHEBI:37565"/>
    </ligand>
</feature>
<feature type="binding site" evidence="1">
    <location>
        <begin position="135"/>
        <end position="138"/>
    </location>
    <ligand>
        <name>GTP</name>
        <dbReference type="ChEBI" id="CHEBI:37565"/>
    </ligand>
</feature>
<comment type="function">
    <text evidence="1">Catalyzes the GTP-dependent ribosomal translocation step during translation elongation. During this step, the ribosome changes from the pre-translocational (PRE) to the post-translocational (POST) state as the newly formed A-site-bound peptidyl-tRNA and P-site-bound deacylated tRNA move to the P and E sites, respectively. Catalyzes the coordinated movement of the two tRNA molecules, the mRNA and conformational changes in the ribosome.</text>
</comment>
<comment type="subcellular location">
    <subcellularLocation>
        <location evidence="1">Cytoplasm</location>
    </subcellularLocation>
</comment>
<comment type="similarity">
    <text evidence="1">Belongs to the TRAFAC class translation factor GTPase superfamily. Classic translation factor GTPase family. EF-G/EF-2 subfamily.</text>
</comment>
<proteinExistence type="inferred from homology"/>
<organism>
    <name type="scientific">Methylorubrum populi (strain ATCC BAA-705 / NCIMB 13946 / BJ001)</name>
    <name type="common">Methylobacterium populi</name>
    <dbReference type="NCBI Taxonomy" id="441620"/>
    <lineage>
        <taxon>Bacteria</taxon>
        <taxon>Pseudomonadati</taxon>
        <taxon>Pseudomonadota</taxon>
        <taxon>Alphaproteobacteria</taxon>
        <taxon>Hyphomicrobiales</taxon>
        <taxon>Methylobacteriaceae</taxon>
        <taxon>Methylorubrum</taxon>
    </lineage>
</organism>
<protein>
    <recommendedName>
        <fullName evidence="1">Elongation factor G</fullName>
        <shortName evidence="1">EF-G</shortName>
    </recommendedName>
</protein>
<accession>B1ZLK1</accession>
<gene>
    <name evidence="1" type="primary">fusA</name>
    <name type="ordered locus">Mpop_2120</name>
</gene>
<dbReference type="EMBL" id="CP001029">
    <property type="protein sequence ID" value="ACB80282.1"/>
    <property type="molecule type" value="Genomic_DNA"/>
</dbReference>
<dbReference type="RefSeq" id="WP_012454024.1">
    <property type="nucleotide sequence ID" value="NC_010725.1"/>
</dbReference>
<dbReference type="SMR" id="B1ZLK1"/>
<dbReference type="STRING" id="441620.Mpop_2120"/>
<dbReference type="KEGG" id="mpo:Mpop_2120"/>
<dbReference type="eggNOG" id="COG0480">
    <property type="taxonomic scope" value="Bacteria"/>
</dbReference>
<dbReference type="HOGENOM" id="CLU_002794_4_1_5"/>
<dbReference type="OrthoDB" id="9802948at2"/>
<dbReference type="Proteomes" id="UP000007136">
    <property type="component" value="Chromosome"/>
</dbReference>
<dbReference type="GO" id="GO:0005737">
    <property type="term" value="C:cytoplasm"/>
    <property type="evidence" value="ECO:0007669"/>
    <property type="project" value="UniProtKB-SubCell"/>
</dbReference>
<dbReference type="GO" id="GO:0005525">
    <property type="term" value="F:GTP binding"/>
    <property type="evidence" value="ECO:0007669"/>
    <property type="project" value="UniProtKB-UniRule"/>
</dbReference>
<dbReference type="GO" id="GO:0003924">
    <property type="term" value="F:GTPase activity"/>
    <property type="evidence" value="ECO:0007669"/>
    <property type="project" value="InterPro"/>
</dbReference>
<dbReference type="GO" id="GO:0003746">
    <property type="term" value="F:translation elongation factor activity"/>
    <property type="evidence" value="ECO:0007669"/>
    <property type="project" value="UniProtKB-UniRule"/>
</dbReference>
<dbReference type="GO" id="GO:0032790">
    <property type="term" value="P:ribosome disassembly"/>
    <property type="evidence" value="ECO:0007669"/>
    <property type="project" value="TreeGrafter"/>
</dbReference>
<dbReference type="CDD" id="cd01886">
    <property type="entry name" value="EF-G"/>
    <property type="match status" value="1"/>
</dbReference>
<dbReference type="CDD" id="cd16262">
    <property type="entry name" value="EFG_III"/>
    <property type="match status" value="1"/>
</dbReference>
<dbReference type="CDD" id="cd01434">
    <property type="entry name" value="EFG_mtEFG1_IV"/>
    <property type="match status" value="1"/>
</dbReference>
<dbReference type="CDD" id="cd03713">
    <property type="entry name" value="EFG_mtEFG_C"/>
    <property type="match status" value="1"/>
</dbReference>
<dbReference type="CDD" id="cd04088">
    <property type="entry name" value="EFG_mtEFG_II"/>
    <property type="match status" value="1"/>
</dbReference>
<dbReference type="FunFam" id="2.40.30.10:FF:000006">
    <property type="entry name" value="Elongation factor G"/>
    <property type="match status" value="1"/>
</dbReference>
<dbReference type="FunFam" id="3.30.230.10:FF:000003">
    <property type="entry name" value="Elongation factor G"/>
    <property type="match status" value="1"/>
</dbReference>
<dbReference type="FunFam" id="3.30.70.240:FF:000001">
    <property type="entry name" value="Elongation factor G"/>
    <property type="match status" value="1"/>
</dbReference>
<dbReference type="FunFam" id="3.30.70.870:FF:000001">
    <property type="entry name" value="Elongation factor G"/>
    <property type="match status" value="1"/>
</dbReference>
<dbReference type="FunFam" id="3.40.50.300:FF:000029">
    <property type="entry name" value="Elongation factor G"/>
    <property type="match status" value="1"/>
</dbReference>
<dbReference type="Gene3D" id="3.30.230.10">
    <property type="match status" value="1"/>
</dbReference>
<dbReference type="Gene3D" id="3.30.70.240">
    <property type="match status" value="1"/>
</dbReference>
<dbReference type="Gene3D" id="3.30.70.870">
    <property type="entry name" value="Elongation Factor G (Translational Gtpase), domain 3"/>
    <property type="match status" value="1"/>
</dbReference>
<dbReference type="Gene3D" id="3.40.50.300">
    <property type="entry name" value="P-loop containing nucleotide triphosphate hydrolases"/>
    <property type="match status" value="1"/>
</dbReference>
<dbReference type="Gene3D" id="2.40.30.10">
    <property type="entry name" value="Translation factors"/>
    <property type="match status" value="1"/>
</dbReference>
<dbReference type="HAMAP" id="MF_00054_B">
    <property type="entry name" value="EF_G_EF_2_B"/>
    <property type="match status" value="1"/>
</dbReference>
<dbReference type="InterPro" id="IPR053905">
    <property type="entry name" value="EF-G-like_DII"/>
</dbReference>
<dbReference type="InterPro" id="IPR041095">
    <property type="entry name" value="EFG_II"/>
</dbReference>
<dbReference type="InterPro" id="IPR009022">
    <property type="entry name" value="EFG_III"/>
</dbReference>
<dbReference type="InterPro" id="IPR035647">
    <property type="entry name" value="EFG_III/V"/>
</dbReference>
<dbReference type="InterPro" id="IPR047872">
    <property type="entry name" value="EFG_IV"/>
</dbReference>
<dbReference type="InterPro" id="IPR035649">
    <property type="entry name" value="EFG_V"/>
</dbReference>
<dbReference type="InterPro" id="IPR000640">
    <property type="entry name" value="EFG_V-like"/>
</dbReference>
<dbReference type="InterPro" id="IPR031157">
    <property type="entry name" value="G_TR_CS"/>
</dbReference>
<dbReference type="InterPro" id="IPR027417">
    <property type="entry name" value="P-loop_NTPase"/>
</dbReference>
<dbReference type="InterPro" id="IPR020568">
    <property type="entry name" value="Ribosomal_Su5_D2-typ_SF"/>
</dbReference>
<dbReference type="InterPro" id="IPR014721">
    <property type="entry name" value="Ribsml_uS5_D2-typ_fold_subgr"/>
</dbReference>
<dbReference type="InterPro" id="IPR005225">
    <property type="entry name" value="Small_GTP-bd"/>
</dbReference>
<dbReference type="InterPro" id="IPR000795">
    <property type="entry name" value="T_Tr_GTP-bd_dom"/>
</dbReference>
<dbReference type="InterPro" id="IPR009000">
    <property type="entry name" value="Transl_B-barrel_sf"/>
</dbReference>
<dbReference type="InterPro" id="IPR004540">
    <property type="entry name" value="Transl_elong_EFG/EF2"/>
</dbReference>
<dbReference type="InterPro" id="IPR005517">
    <property type="entry name" value="Transl_elong_EFG/EF2_IV"/>
</dbReference>
<dbReference type="NCBIfam" id="TIGR00484">
    <property type="entry name" value="EF-G"/>
    <property type="match status" value="1"/>
</dbReference>
<dbReference type="NCBIfam" id="NF009379">
    <property type="entry name" value="PRK12740.1-3"/>
    <property type="match status" value="1"/>
</dbReference>
<dbReference type="NCBIfam" id="NF009381">
    <property type="entry name" value="PRK12740.1-5"/>
    <property type="match status" value="1"/>
</dbReference>
<dbReference type="NCBIfam" id="TIGR00231">
    <property type="entry name" value="small_GTP"/>
    <property type="match status" value="1"/>
</dbReference>
<dbReference type="PANTHER" id="PTHR43261:SF1">
    <property type="entry name" value="RIBOSOME-RELEASING FACTOR 2, MITOCHONDRIAL"/>
    <property type="match status" value="1"/>
</dbReference>
<dbReference type="PANTHER" id="PTHR43261">
    <property type="entry name" value="TRANSLATION ELONGATION FACTOR G-RELATED"/>
    <property type="match status" value="1"/>
</dbReference>
<dbReference type="Pfam" id="PF22042">
    <property type="entry name" value="EF-G_D2"/>
    <property type="match status" value="1"/>
</dbReference>
<dbReference type="Pfam" id="PF00679">
    <property type="entry name" value="EFG_C"/>
    <property type="match status" value="1"/>
</dbReference>
<dbReference type="Pfam" id="PF14492">
    <property type="entry name" value="EFG_III"/>
    <property type="match status" value="1"/>
</dbReference>
<dbReference type="Pfam" id="PF03764">
    <property type="entry name" value="EFG_IV"/>
    <property type="match status" value="1"/>
</dbReference>
<dbReference type="Pfam" id="PF00009">
    <property type="entry name" value="GTP_EFTU"/>
    <property type="match status" value="1"/>
</dbReference>
<dbReference type="PRINTS" id="PR00315">
    <property type="entry name" value="ELONGATNFCT"/>
</dbReference>
<dbReference type="SMART" id="SM00838">
    <property type="entry name" value="EFG_C"/>
    <property type="match status" value="1"/>
</dbReference>
<dbReference type="SMART" id="SM00889">
    <property type="entry name" value="EFG_IV"/>
    <property type="match status" value="1"/>
</dbReference>
<dbReference type="SUPFAM" id="SSF54980">
    <property type="entry name" value="EF-G C-terminal domain-like"/>
    <property type="match status" value="2"/>
</dbReference>
<dbReference type="SUPFAM" id="SSF52540">
    <property type="entry name" value="P-loop containing nucleoside triphosphate hydrolases"/>
    <property type="match status" value="1"/>
</dbReference>
<dbReference type="SUPFAM" id="SSF54211">
    <property type="entry name" value="Ribosomal protein S5 domain 2-like"/>
    <property type="match status" value="1"/>
</dbReference>
<dbReference type="SUPFAM" id="SSF50447">
    <property type="entry name" value="Translation proteins"/>
    <property type="match status" value="1"/>
</dbReference>
<dbReference type="PROSITE" id="PS00301">
    <property type="entry name" value="G_TR_1"/>
    <property type="match status" value="1"/>
</dbReference>
<dbReference type="PROSITE" id="PS51722">
    <property type="entry name" value="G_TR_2"/>
    <property type="match status" value="1"/>
</dbReference>
<sequence>MPRTHAIEDYRNFGIMAHIDAGKTTTTERILYYTGKSHKIGEVHEGAATMDWMEQEQERGITITSAATTCFWRDKRLNIIDTPGHVDFTIEVERSLRVLDGAVCVLDGNQGVEPQTETVWRQADKYDVPRVVFVNKMDKIGADFFKCVADIIGRVAGKPVCLQLPIGAESSFKGVIDLIKMKAIVWSGEALGANFAEEEIPAELKDQAVEYRTKLVEACVELDDDAMTAYLDGVEPDEDGLRRLVRRAVQLRAFHPVLCGSAFKNKGVQPLLDAVVDYLPSPVDRGAVDGLDFKTEEPVKREPTDEDPFSMLAFKIMDDPHVGTITFCRVYSGKVESGTSVLNSSRDKKERVGRMLLMHANNREDIKEAYAGDIVALAGLKDTRTGDTLCDANKAVILEKMEFPEPVIEIAVEPKSKADQEKLGIALSKLAAEDPSFRVSTDQESGQTILKGMGELHLDIKVDILRRTYKVDANIGQPQVAYREKLTRRQEIDYTHKKQTGGTGQFARVKFVVEPNEPGAGFSFESKIVGGAVPKEYIPGVEKGLNSVLGAGVLAGFPVVDVKVELVDGAYHDVDSSALAFEIASRAAFREALQKGGSVLLEPVMKVEVVSPEEYTGSVIGDLNSRRGQIQGQDMRGNANVINAMVPLANMFGYVNQLRSFSQGRANFTMQFDHYEEVPRGEADKVIAKYA</sequence>
<name>EFG_METPB</name>